<feature type="chain" id="PRO_0000176941" description="Transcription elongation factor GreA">
    <location>
        <begin position="1"/>
        <end position="160"/>
    </location>
</feature>
<feature type="coiled-coil region" evidence="1">
    <location>
        <begin position="8"/>
        <end position="28"/>
    </location>
</feature>
<evidence type="ECO:0000255" key="1">
    <source>
        <dbReference type="HAMAP-Rule" id="MF_00105"/>
    </source>
</evidence>
<gene>
    <name evidence="1" type="primary">greA</name>
    <name type="ordered locus">MPN_401</name>
    <name type="ORF">MP437</name>
</gene>
<organism>
    <name type="scientific">Mycoplasma pneumoniae (strain ATCC 29342 / M129 / Subtype 1)</name>
    <name type="common">Mycoplasmoides pneumoniae</name>
    <dbReference type="NCBI Taxonomy" id="272634"/>
    <lineage>
        <taxon>Bacteria</taxon>
        <taxon>Bacillati</taxon>
        <taxon>Mycoplasmatota</taxon>
        <taxon>Mycoplasmoidales</taxon>
        <taxon>Mycoplasmoidaceae</taxon>
        <taxon>Mycoplasmoides</taxon>
    </lineage>
</organism>
<sequence length="160" mass="18101">MELNKNYLTEEGLKQLEAELEHLIQVKRPAIIKLLQEARDQGDLSENADYDAAKAQQGEIETRIAEIQDILANVKLINESQTKKANKVTLGSTVEIYDYSSKTHEKYTIVGALEANPEEHRISNESPLAHAIYGRLVDDECDVVGIEVPYRVKIVKIINW</sequence>
<protein>
    <recommendedName>
        <fullName evidence="1">Transcription elongation factor GreA</fullName>
    </recommendedName>
    <alternativeName>
        <fullName evidence="1">Transcript cleavage factor GreA</fullName>
    </alternativeName>
</protein>
<name>GREA_MYCPN</name>
<proteinExistence type="inferred from homology"/>
<dbReference type="EMBL" id="U00089">
    <property type="protein sequence ID" value="AAB96085.1"/>
    <property type="molecule type" value="Genomic_DNA"/>
</dbReference>
<dbReference type="PIR" id="S73763">
    <property type="entry name" value="S73763"/>
</dbReference>
<dbReference type="RefSeq" id="NP_110089.1">
    <property type="nucleotide sequence ID" value="NC_000912.1"/>
</dbReference>
<dbReference type="RefSeq" id="WP_010874757.1">
    <property type="nucleotide sequence ID" value="NZ_OU342337.1"/>
</dbReference>
<dbReference type="SMR" id="P78019"/>
<dbReference type="IntAct" id="P78019">
    <property type="interactions" value="2"/>
</dbReference>
<dbReference type="STRING" id="272634.MPN_401"/>
<dbReference type="EnsemblBacteria" id="AAB96085">
    <property type="protein sequence ID" value="AAB96085"/>
    <property type="gene ID" value="MPN_401"/>
</dbReference>
<dbReference type="KEGG" id="mpn:MPN_401"/>
<dbReference type="PATRIC" id="fig|272634.6.peg.433"/>
<dbReference type="HOGENOM" id="CLU_101379_2_1_14"/>
<dbReference type="OrthoDB" id="9808774at2"/>
<dbReference type="BioCyc" id="MPNE272634:G1GJ3-643-MONOMER"/>
<dbReference type="Proteomes" id="UP000000808">
    <property type="component" value="Chromosome"/>
</dbReference>
<dbReference type="GO" id="GO:0003677">
    <property type="term" value="F:DNA binding"/>
    <property type="evidence" value="ECO:0007669"/>
    <property type="project" value="UniProtKB-UniRule"/>
</dbReference>
<dbReference type="GO" id="GO:0070063">
    <property type="term" value="F:RNA polymerase binding"/>
    <property type="evidence" value="ECO:0007669"/>
    <property type="project" value="InterPro"/>
</dbReference>
<dbReference type="GO" id="GO:0006354">
    <property type="term" value="P:DNA-templated transcription elongation"/>
    <property type="evidence" value="ECO:0007669"/>
    <property type="project" value="TreeGrafter"/>
</dbReference>
<dbReference type="GO" id="GO:0032784">
    <property type="term" value="P:regulation of DNA-templated transcription elongation"/>
    <property type="evidence" value="ECO:0007669"/>
    <property type="project" value="UniProtKB-UniRule"/>
</dbReference>
<dbReference type="FunFam" id="1.10.287.180:FF:000001">
    <property type="entry name" value="Transcription elongation factor GreA"/>
    <property type="match status" value="1"/>
</dbReference>
<dbReference type="Gene3D" id="3.10.50.30">
    <property type="entry name" value="Transcription elongation factor, GreA/GreB, C-terminal domain"/>
    <property type="match status" value="1"/>
</dbReference>
<dbReference type="Gene3D" id="1.10.287.180">
    <property type="entry name" value="Transcription elongation factor, GreA/GreB, N-terminal domain"/>
    <property type="match status" value="1"/>
</dbReference>
<dbReference type="HAMAP" id="MF_00105">
    <property type="entry name" value="GreA_GreB"/>
    <property type="match status" value="1"/>
</dbReference>
<dbReference type="InterPro" id="IPR036953">
    <property type="entry name" value="GreA/GreB_C_sf"/>
</dbReference>
<dbReference type="InterPro" id="IPR018151">
    <property type="entry name" value="TF_GreA/GreB_CS"/>
</dbReference>
<dbReference type="InterPro" id="IPR006359">
    <property type="entry name" value="Tscrpt_elong_fac_GreA"/>
</dbReference>
<dbReference type="InterPro" id="IPR028624">
    <property type="entry name" value="Tscrpt_elong_fac_GreA/B"/>
</dbReference>
<dbReference type="InterPro" id="IPR001437">
    <property type="entry name" value="Tscrpt_elong_fac_GreA/B_C"/>
</dbReference>
<dbReference type="InterPro" id="IPR023459">
    <property type="entry name" value="Tscrpt_elong_fac_GreA/B_fam"/>
</dbReference>
<dbReference type="InterPro" id="IPR022691">
    <property type="entry name" value="Tscrpt_elong_fac_GreA/B_N"/>
</dbReference>
<dbReference type="InterPro" id="IPR036805">
    <property type="entry name" value="Tscrpt_elong_fac_GreA/B_N_sf"/>
</dbReference>
<dbReference type="NCBIfam" id="TIGR01462">
    <property type="entry name" value="greA"/>
    <property type="match status" value="1"/>
</dbReference>
<dbReference type="NCBIfam" id="NF001263">
    <property type="entry name" value="PRK00226.1-4"/>
    <property type="match status" value="1"/>
</dbReference>
<dbReference type="PANTHER" id="PTHR30437">
    <property type="entry name" value="TRANSCRIPTION ELONGATION FACTOR GREA"/>
    <property type="match status" value="1"/>
</dbReference>
<dbReference type="PANTHER" id="PTHR30437:SF4">
    <property type="entry name" value="TRANSCRIPTION ELONGATION FACTOR GREA"/>
    <property type="match status" value="1"/>
</dbReference>
<dbReference type="Pfam" id="PF01272">
    <property type="entry name" value="GreA_GreB"/>
    <property type="match status" value="1"/>
</dbReference>
<dbReference type="Pfam" id="PF03449">
    <property type="entry name" value="GreA_GreB_N"/>
    <property type="match status" value="1"/>
</dbReference>
<dbReference type="PIRSF" id="PIRSF006092">
    <property type="entry name" value="GreA_GreB"/>
    <property type="match status" value="1"/>
</dbReference>
<dbReference type="SUPFAM" id="SSF54534">
    <property type="entry name" value="FKBP-like"/>
    <property type="match status" value="1"/>
</dbReference>
<dbReference type="SUPFAM" id="SSF46557">
    <property type="entry name" value="GreA transcript cleavage protein, N-terminal domain"/>
    <property type="match status" value="1"/>
</dbReference>
<dbReference type="PROSITE" id="PS00829">
    <property type="entry name" value="GREAB_1"/>
    <property type="match status" value="1"/>
</dbReference>
<dbReference type="PROSITE" id="PS00830">
    <property type="entry name" value="GREAB_2"/>
    <property type="match status" value="1"/>
</dbReference>
<comment type="function">
    <text evidence="1">Necessary for efficient RNA polymerase transcription elongation past template-encoded arresting sites. The arresting sites in DNA have the property of trapping a certain fraction of elongating RNA polymerases that pass through, resulting in locked ternary complexes. Cleavage of the nascent transcript by cleavage factors such as GreA or GreB allows the resumption of elongation from the new 3'terminus. GreA releases sequences of 2 to 3 nucleotides.</text>
</comment>
<comment type="similarity">
    <text evidence="1">Belongs to the GreA/GreB family.</text>
</comment>
<reference key="1">
    <citation type="journal article" date="1996" name="Nucleic Acids Res.">
        <title>Complete sequence analysis of the genome of the bacterium Mycoplasma pneumoniae.</title>
        <authorList>
            <person name="Himmelreich R."/>
            <person name="Hilbert H."/>
            <person name="Plagens H."/>
            <person name="Pirkl E."/>
            <person name="Li B.-C."/>
            <person name="Herrmann R."/>
        </authorList>
    </citation>
    <scope>NUCLEOTIDE SEQUENCE [LARGE SCALE GENOMIC DNA]</scope>
    <source>
        <strain>ATCC 29342 / M129 / Subtype 1</strain>
    </source>
</reference>
<keyword id="KW-0175">Coiled coil</keyword>
<keyword id="KW-0238">DNA-binding</keyword>
<keyword id="KW-1185">Reference proteome</keyword>
<keyword id="KW-0804">Transcription</keyword>
<keyword id="KW-0805">Transcription regulation</keyword>
<accession>P78019</accession>